<protein>
    <recommendedName>
        <fullName>Histone H2A.2</fullName>
    </recommendedName>
</protein>
<dbReference type="EMBL" id="CR380957">
    <property type="protein sequence ID" value="CAG61676.1"/>
    <property type="molecule type" value="Genomic_DNA"/>
</dbReference>
<dbReference type="RefSeq" id="XP_448713.1">
    <property type="nucleotide sequence ID" value="XM_448713.1"/>
</dbReference>
<dbReference type="SMR" id="Q6FM31"/>
<dbReference type="FunCoup" id="Q6FM31">
    <property type="interactions" value="1327"/>
</dbReference>
<dbReference type="STRING" id="284593.Q6FM31"/>
<dbReference type="EnsemblFungi" id="CAGL0K11440g-T">
    <property type="protein sequence ID" value="CAGL0K11440g-T-p1"/>
    <property type="gene ID" value="CAGL0K11440g"/>
</dbReference>
<dbReference type="KEGG" id="cgr:2890072"/>
<dbReference type="CGD" id="CAL0134419">
    <property type="gene designation" value="CAGL0K11440g"/>
</dbReference>
<dbReference type="VEuPathDB" id="FungiDB:CAGL0K11440g"/>
<dbReference type="eggNOG" id="KOG1756">
    <property type="taxonomic scope" value="Eukaryota"/>
</dbReference>
<dbReference type="HOGENOM" id="CLU_062828_3_1_1"/>
<dbReference type="InParanoid" id="Q6FM31"/>
<dbReference type="OMA" id="YWARRTA"/>
<dbReference type="Proteomes" id="UP000002428">
    <property type="component" value="Chromosome K"/>
</dbReference>
<dbReference type="GO" id="GO:0000786">
    <property type="term" value="C:nucleosome"/>
    <property type="evidence" value="ECO:0007669"/>
    <property type="project" value="UniProtKB-KW"/>
</dbReference>
<dbReference type="GO" id="GO:0005634">
    <property type="term" value="C:nucleus"/>
    <property type="evidence" value="ECO:0007669"/>
    <property type="project" value="UniProtKB-SubCell"/>
</dbReference>
<dbReference type="GO" id="GO:0003677">
    <property type="term" value="F:DNA binding"/>
    <property type="evidence" value="ECO:0007669"/>
    <property type="project" value="UniProtKB-KW"/>
</dbReference>
<dbReference type="GO" id="GO:0046982">
    <property type="term" value="F:protein heterodimerization activity"/>
    <property type="evidence" value="ECO:0007669"/>
    <property type="project" value="InterPro"/>
</dbReference>
<dbReference type="GO" id="GO:0030527">
    <property type="term" value="F:structural constituent of chromatin"/>
    <property type="evidence" value="ECO:0007669"/>
    <property type="project" value="InterPro"/>
</dbReference>
<dbReference type="GO" id="GO:0006281">
    <property type="term" value="P:DNA repair"/>
    <property type="evidence" value="ECO:0007669"/>
    <property type="project" value="UniProtKB-KW"/>
</dbReference>
<dbReference type="CDD" id="cd00074">
    <property type="entry name" value="HFD_H2A"/>
    <property type="match status" value="1"/>
</dbReference>
<dbReference type="FunFam" id="1.10.20.10:FF:000008">
    <property type="entry name" value="Histone H2A"/>
    <property type="match status" value="1"/>
</dbReference>
<dbReference type="Gene3D" id="1.10.20.10">
    <property type="entry name" value="Histone, subunit A"/>
    <property type="match status" value="1"/>
</dbReference>
<dbReference type="InterPro" id="IPR009072">
    <property type="entry name" value="Histone-fold"/>
</dbReference>
<dbReference type="InterPro" id="IPR002119">
    <property type="entry name" value="Histone_H2A"/>
</dbReference>
<dbReference type="InterPro" id="IPR007125">
    <property type="entry name" value="Histone_H2A/H2B/H3"/>
</dbReference>
<dbReference type="InterPro" id="IPR032454">
    <property type="entry name" value="Histone_H2A_C"/>
</dbReference>
<dbReference type="InterPro" id="IPR032458">
    <property type="entry name" value="Histone_H2A_CS"/>
</dbReference>
<dbReference type="PANTHER" id="PTHR23430">
    <property type="entry name" value="HISTONE H2A"/>
    <property type="match status" value="1"/>
</dbReference>
<dbReference type="Pfam" id="PF00125">
    <property type="entry name" value="Histone"/>
    <property type="match status" value="1"/>
</dbReference>
<dbReference type="Pfam" id="PF16211">
    <property type="entry name" value="Histone_H2A_C"/>
    <property type="match status" value="1"/>
</dbReference>
<dbReference type="PRINTS" id="PR00620">
    <property type="entry name" value="HISTONEH2A"/>
</dbReference>
<dbReference type="SMART" id="SM00414">
    <property type="entry name" value="H2A"/>
    <property type="match status" value="1"/>
</dbReference>
<dbReference type="SUPFAM" id="SSF47113">
    <property type="entry name" value="Histone-fold"/>
    <property type="match status" value="1"/>
</dbReference>
<dbReference type="PROSITE" id="PS00046">
    <property type="entry name" value="HISTONE_H2A"/>
    <property type="match status" value="1"/>
</dbReference>
<evidence type="ECO:0000250" key="1"/>
<evidence type="ECO:0000305" key="2"/>
<gene>
    <name type="primary">HTA2</name>
    <name type="ordered locus">CAGL0K11440g</name>
</gene>
<keyword id="KW-0007">Acetylation</keyword>
<keyword id="KW-0158">Chromosome</keyword>
<keyword id="KW-0227">DNA damage</keyword>
<keyword id="KW-0234">DNA repair</keyword>
<keyword id="KW-0238">DNA-binding</keyword>
<keyword id="KW-0488">Methylation</keyword>
<keyword id="KW-0544">Nucleosome core</keyword>
<keyword id="KW-0539">Nucleus</keyword>
<keyword id="KW-0597">Phosphoprotein</keyword>
<keyword id="KW-1185">Reference proteome</keyword>
<proteinExistence type="inferred from homology"/>
<sequence>MSGGKGGKVGSAAKASQTRSAKAGLTFPVGRVHRLLRRGNYAQRIGSGAPVYLTAVLEYLAAEILELAGNAARDNKKSRIIPRHLQLAIRNDDELNKLLGNVTIAQGGVLPNIHQNLLPKKSAKPSASQEL</sequence>
<name>H2A2_CANGA</name>
<comment type="function">
    <text>Core component of nucleosome which plays a central role in DNA double strand break (DSB) repair. Nucleosomes wrap and compact DNA into chromatin, limiting DNA accessibility to the cellular machineries which require DNA as a template. Histones thereby play a central role in transcription regulation, DNA repair, DNA replication and chromosomal stability. DNA accessibility is regulated via a complex set of post-translational modifications of histones, also called histone code, and nucleosome remodeling.</text>
</comment>
<comment type="subunit">
    <text>The nucleosome is a histone octamer containing two molecules each of H2A, H2B, H3 and H4 assembled in one H3-H4 heterotetramer and two H2A-H2B heterodimers. The octamer wraps approximately 147 bp of DNA.</text>
</comment>
<comment type="subcellular location">
    <subcellularLocation>
        <location>Nucleus</location>
    </subcellularLocation>
    <subcellularLocation>
        <location>Chromosome</location>
    </subcellularLocation>
</comment>
<comment type="domain">
    <text>The [ST]-Q motif constitutes a recognition sequence for kinases from the PI3/PI4-kinase family.</text>
</comment>
<comment type="PTM">
    <text evidence="1">Phosphorylated to form H2AS128ph (gamma-H2A) in response to DNA double-strand breaks (DSBs) generated by exogenous genotoxic agents and by stalled replication forks. Phosphorylation is dependent on the DNA damage checkpoint kinases MEC1/ATR and TEL1/ATM, spreads on either side of a detected DSB site and may mark the surrounding chromatin for recruitment of proteins required for DNA damage signaling and repair. Gamma-H2A is removed from the DNA prior to the strand invasion-primer extension step of the repair process and subsequently dephosphorylated by PPH3, a component of the histone H2A phosphatase complex (HTP-C). Dephosphorylation is necessary for efficient recovery from the DNA damage checkpoint (By similarity).</text>
</comment>
<comment type="PTM">
    <text evidence="1">Acetylated by ESA1 to form H2AK4ac and H2AK7ac.</text>
</comment>
<comment type="miscellaneous">
    <text evidence="2">In contrast to vertebrates and insects, its C-terminus is not monoubiquitinated.</text>
</comment>
<comment type="similarity">
    <text evidence="2">Belongs to the histone H2A family.</text>
</comment>
<comment type="caution">
    <text evidence="2">To ensure consistency between histone entries, we follow the 'Brno' nomenclature for histone modifications, with positions referring to those used in the literature for the 'closest' model organism. Due to slight variations in histone sequences between organisms and to the presence of initiator methionine in UniProtKB/Swiss-Prot sequences, the actual positions of modified amino acids in the sequence generally differ. In this entry the following conventions are used: H2AK4ac = acetylated Lys-5; H2AK7ac = acetylated Lys-8; H2AS128ph = phosphorylated Ser-128.</text>
</comment>
<reference key="1">
    <citation type="journal article" date="2004" name="Nature">
        <title>Genome evolution in yeasts.</title>
        <authorList>
            <person name="Dujon B."/>
            <person name="Sherman D."/>
            <person name="Fischer G."/>
            <person name="Durrens P."/>
            <person name="Casaregola S."/>
            <person name="Lafontaine I."/>
            <person name="de Montigny J."/>
            <person name="Marck C."/>
            <person name="Neuveglise C."/>
            <person name="Talla E."/>
            <person name="Goffard N."/>
            <person name="Frangeul L."/>
            <person name="Aigle M."/>
            <person name="Anthouard V."/>
            <person name="Babour A."/>
            <person name="Barbe V."/>
            <person name="Barnay S."/>
            <person name="Blanchin S."/>
            <person name="Beckerich J.-M."/>
            <person name="Beyne E."/>
            <person name="Bleykasten C."/>
            <person name="Boisrame A."/>
            <person name="Boyer J."/>
            <person name="Cattolico L."/>
            <person name="Confanioleri F."/>
            <person name="de Daruvar A."/>
            <person name="Despons L."/>
            <person name="Fabre E."/>
            <person name="Fairhead C."/>
            <person name="Ferry-Dumazet H."/>
            <person name="Groppi A."/>
            <person name="Hantraye F."/>
            <person name="Hennequin C."/>
            <person name="Jauniaux N."/>
            <person name="Joyet P."/>
            <person name="Kachouri R."/>
            <person name="Kerrest A."/>
            <person name="Koszul R."/>
            <person name="Lemaire M."/>
            <person name="Lesur I."/>
            <person name="Ma L."/>
            <person name="Muller H."/>
            <person name="Nicaud J.-M."/>
            <person name="Nikolski M."/>
            <person name="Oztas S."/>
            <person name="Ozier-Kalogeropoulos O."/>
            <person name="Pellenz S."/>
            <person name="Potier S."/>
            <person name="Richard G.-F."/>
            <person name="Straub M.-L."/>
            <person name="Suleau A."/>
            <person name="Swennen D."/>
            <person name="Tekaia F."/>
            <person name="Wesolowski-Louvel M."/>
            <person name="Westhof E."/>
            <person name="Wirth B."/>
            <person name="Zeniou-Meyer M."/>
            <person name="Zivanovic Y."/>
            <person name="Bolotin-Fukuhara M."/>
            <person name="Thierry A."/>
            <person name="Bouchier C."/>
            <person name="Caudron B."/>
            <person name="Scarpelli C."/>
            <person name="Gaillardin C."/>
            <person name="Weissenbach J."/>
            <person name="Wincker P."/>
            <person name="Souciet J.-L."/>
        </authorList>
    </citation>
    <scope>NUCLEOTIDE SEQUENCE [LARGE SCALE GENOMIC DNA]</scope>
    <source>
        <strain>ATCC 2001 / BCRC 20586 / JCM 3761 / NBRC 0622 / NRRL Y-65 / CBS 138</strain>
    </source>
</reference>
<accession>Q6FM31</accession>
<feature type="initiator methionine" description="Removed" evidence="1">
    <location>
        <position position="1"/>
    </location>
</feature>
<feature type="chain" id="PRO_0000055213" description="Histone H2A.2">
    <location>
        <begin position="2"/>
        <end position="131"/>
    </location>
</feature>
<feature type="short sequence motif" description="[ST]-Q motif">
    <location>
        <begin position="128"/>
        <end position="129"/>
    </location>
</feature>
<feature type="site" description="Not ubiquitinated" evidence="2">
    <location>
        <position position="120"/>
    </location>
</feature>
<feature type="modified residue" description="N-acetylserine" evidence="1">
    <location>
        <position position="2"/>
    </location>
</feature>
<feature type="modified residue" description="N6-acetyllysine" evidence="1">
    <location>
        <position position="5"/>
    </location>
</feature>
<feature type="modified residue" description="N6-acetyllysine" evidence="1">
    <location>
        <position position="8"/>
    </location>
</feature>
<feature type="modified residue" description="N5-methylglutamine" evidence="1">
    <location>
        <position position="106"/>
    </location>
</feature>
<feature type="modified residue" description="Phosphoserine" evidence="1">
    <location>
        <position position="128"/>
    </location>
</feature>
<organism>
    <name type="scientific">Candida glabrata (strain ATCC 2001 / BCRC 20586 / JCM 3761 / NBRC 0622 / NRRL Y-65 / CBS 138)</name>
    <name type="common">Yeast</name>
    <name type="synonym">Nakaseomyces glabratus</name>
    <dbReference type="NCBI Taxonomy" id="284593"/>
    <lineage>
        <taxon>Eukaryota</taxon>
        <taxon>Fungi</taxon>
        <taxon>Dikarya</taxon>
        <taxon>Ascomycota</taxon>
        <taxon>Saccharomycotina</taxon>
        <taxon>Saccharomycetes</taxon>
        <taxon>Saccharomycetales</taxon>
        <taxon>Saccharomycetaceae</taxon>
        <taxon>Nakaseomyces</taxon>
    </lineage>
</organism>